<accession>Q047F9</accession>
<protein>
    <recommendedName>
        <fullName evidence="1">tRNA modification GTPase MnmE</fullName>
        <ecNumber evidence="1">3.6.-.-</ecNumber>
    </recommendedName>
</protein>
<sequence length="461" mass="49965">MVQRLTEFDTIAAISTPLGEGGISIVRVSGEDAVAIVNRLFKGKDLEKVPSHTINYGHIVDPATGQVIDEVMASVMLAPKTFTKEDIVEINCHGGIVVTNDILQLLLANGARMADPGEFTKRAFVNGRIDLTQAESVMDIIRAKTDKARQVAVKQLSGGLLTEIRALRQEILDVLANVEVNIDYPEYDEEEVTAQKLLACAEAVSGKIDRLLETAQEGQILRNGLKTAIVGRPNVGKSSLLNYLTQSDKAIVTDVAGTTRDTLEEFVSVKGVPLELIDTAGIHHTEDQVEKIGVERSKKAIAQADLILLLLDGSQELTEEDRQLLELTAGKKRIIVLNKTDLGQKLTAAEIAKESGSEVISTSIMMKENLDELEALIKKLFFKGIENSNDQVLVTNQRQAGLLAKAKQQLADVASGLEAGMPVDLVQIDFTGAWESLGEITGDSAPDELINDLFSQFCLGK</sequence>
<feature type="chain" id="PRO_0000345808" description="tRNA modification GTPase MnmE">
    <location>
        <begin position="1"/>
        <end position="461"/>
    </location>
</feature>
<feature type="domain" description="TrmE-type G">
    <location>
        <begin position="224"/>
        <end position="382"/>
    </location>
</feature>
<feature type="binding site" evidence="1">
    <location>
        <position position="27"/>
    </location>
    <ligand>
        <name>(6S)-5-formyl-5,6,7,8-tetrahydrofolate</name>
        <dbReference type="ChEBI" id="CHEBI:57457"/>
    </ligand>
</feature>
<feature type="binding site" evidence="1">
    <location>
        <position position="89"/>
    </location>
    <ligand>
        <name>(6S)-5-formyl-5,6,7,8-tetrahydrofolate</name>
        <dbReference type="ChEBI" id="CHEBI:57457"/>
    </ligand>
</feature>
<feature type="binding site" evidence="1">
    <location>
        <position position="128"/>
    </location>
    <ligand>
        <name>(6S)-5-formyl-5,6,7,8-tetrahydrofolate</name>
        <dbReference type="ChEBI" id="CHEBI:57457"/>
    </ligand>
</feature>
<feature type="binding site" evidence="1">
    <location>
        <begin position="234"/>
        <end position="239"/>
    </location>
    <ligand>
        <name>GTP</name>
        <dbReference type="ChEBI" id="CHEBI:37565"/>
    </ligand>
</feature>
<feature type="binding site" evidence="1">
    <location>
        <position position="234"/>
    </location>
    <ligand>
        <name>K(+)</name>
        <dbReference type="ChEBI" id="CHEBI:29103"/>
    </ligand>
</feature>
<feature type="binding site" evidence="1">
    <location>
        <position position="238"/>
    </location>
    <ligand>
        <name>Mg(2+)</name>
        <dbReference type="ChEBI" id="CHEBI:18420"/>
    </ligand>
</feature>
<feature type="binding site" evidence="1">
    <location>
        <begin position="253"/>
        <end position="259"/>
    </location>
    <ligand>
        <name>GTP</name>
        <dbReference type="ChEBI" id="CHEBI:37565"/>
    </ligand>
</feature>
<feature type="binding site" evidence="1">
    <location>
        <position position="253"/>
    </location>
    <ligand>
        <name>K(+)</name>
        <dbReference type="ChEBI" id="CHEBI:29103"/>
    </ligand>
</feature>
<feature type="binding site" evidence="1">
    <location>
        <position position="255"/>
    </location>
    <ligand>
        <name>K(+)</name>
        <dbReference type="ChEBI" id="CHEBI:29103"/>
    </ligand>
</feature>
<feature type="binding site" evidence="1">
    <location>
        <position position="258"/>
    </location>
    <ligand>
        <name>K(+)</name>
        <dbReference type="ChEBI" id="CHEBI:29103"/>
    </ligand>
</feature>
<feature type="binding site" evidence="1">
    <location>
        <position position="259"/>
    </location>
    <ligand>
        <name>Mg(2+)</name>
        <dbReference type="ChEBI" id="CHEBI:18420"/>
    </ligand>
</feature>
<feature type="binding site" evidence="1">
    <location>
        <begin position="278"/>
        <end position="281"/>
    </location>
    <ligand>
        <name>GTP</name>
        <dbReference type="ChEBI" id="CHEBI:37565"/>
    </ligand>
</feature>
<feature type="binding site" evidence="1">
    <location>
        <position position="461"/>
    </location>
    <ligand>
        <name>(6S)-5-formyl-5,6,7,8-tetrahydrofolate</name>
        <dbReference type="ChEBI" id="CHEBI:57457"/>
    </ligand>
</feature>
<proteinExistence type="inferred from homology"/>
<gene>
    <name evidence="1" type="primary">mnmE</name>
    <name evidence="1" type="synonym">trmE</name>
    <name type="ordered locus">LBUL_2036</name>
</gene>
<reference key="1">
    <citation type="journal article" date="2006" name="Proc. Natl. Acad. Sci. U.S.A.">
        <title>Comparative genomics of the lactic acid bacteria.</title>
        <authorList>
            <person name="Makarova K.S."/>
            <person name="Slesarev A."/>
            <person name="Wolf Y.I."/>
            <person name="Sorokin A."/>
            <person name="Mirkin B."/>
            <person name="Koonin E.V."/>
            <person name="Pavlov A."/>
            <person name="Pavlova N."/>
            <person name="Karamychev V."/>
            <person name="Polouchine N."/>
            <person name="Shakhova V."/>
            <person name="Grigoriev I."/>
            <person name="Lou Y."/>
            <person name="Rohksar D."/>
            <person name="Lucas S."/>
            <person name="Huang K."/>
            <person name="Goodstein D.M."/>
            <person name="Hawkins T."/>
            <person name="Plengvidhya V."/>
            <person name="Welker D."/>
            <person name="Hughes J."/>
            <person name="Goh Y."/>
            <person name="Benson A."/>
            <person name="Baldwin K."/>
            <person name="Lee J.-H."/>
            <person name="Diaz-Muniz I."/>
            <person name="Dosti B."/>
            <person name="Smeianov V."/>
            <person name="Wechter W."/>
            <person name="Barabote R."/>
            <person name="Lorca G."/>
            <person name="Altermann E."/>
            <person name="Barrangou R."/>
            <person name="Ganesan B."/>
            <person name="Xie Y."/>
            <person name="Rawsthorne H."/>
            <person name="Tamir D."/>
            <person name="Parker C."/>
            <person name="Breidt F."/>
            <person name="Broadbent J.R."/>
            <person name="Hutkins R."/>
            <person name="O'Sullivan D."/>
            <person name="Steele J."/>
            <person name="Unlu G."/>
            <person name="Saier M.H. Jr."/>
            <person name="Klaenhammer T."/>
            <person name="Richardson P."/>
            <person name="Kozyavkin S."/>
            <person name="Weimer B.C."/>
            <person name="Mills D.A."/>
        </authorList>
    </citation>
    <scope>NUCLEOTIDE SEQUENCE [LARGE SCALE GENOMIC DNA]</scope>
    <source>
        <strain>ATCC BAA-365 / Lb-18</strain>
    </source>
</reference>
<comment type="function">
    <text evidence="1">Exhibits a very high intrinsic GTPase hydrolysis rate. Involved in the addition of a carboxymethylaminomethyl (cmnm) group at the wobble position (U34) of certain tRNAs, forming tRNA-cmnm(5)s(2)U34.</text>
</comment>
<comment type="cofactor">
    <cofactor evidence="1">
        <name>K(+)</name>
        <dbReference type="ChEBI" id="CHEBI:29103"/>
    </cofactor>
    <text evidence="1">Binds 1 potassium ion per subunit.</text>
</comment>
<comment type="subunit">
    <text evidence="1">Homodimer. Heterotetramer of two MnmE and two MnmG subunits.</text>
</comment>
<comment type="subcellular location">
    <subcellularLocation>
        <location evidence="1">Cytoplasm</location>
    </subcellularLocation>
</comment>
<comment type="similarity">
    <text evidence="1">Belongs to the TRAFAC class TrmE-Era-EngA-EngB-Septin-like GTPase superfamily. TrmE GTPase family.</text>
</comment>
<organism>
    <name type="scientific">Lactobacillus delbrueckii subsp. bulgaricus (strain ATCC BAA-365 / Lb-18)</name>
    <dbReference type="NCBI Taxonomy" id="321956"/>
    <lineage>
        <taxon>Bacteria</taxon>
        <taxon>Bacillati</taxon>
        <taxon>Bacillota</taxon>
        <taxon>Bacilli</taxon>
        <taxon>Lactobacillales</taxon>
        <taxon>Lactobacillaceae</taxon>
        <taxon>Lactobacillus</taxon>
    </lineage>
</organism>
<name>MNME_LACDB</name>
<evidence type="ECO:0000255" key="1">
    <source>
        <dbReference type="HAMAP-Rule" id="MF_00379"/>
    </source>
</evidence>
<keyword id="KW-0963">Cytoplasm</keyword>
<keyword id="KW-0342">GTP-binding</keyword>
<keyword id="KW-0378">Hydrolase</keyword>
<keyword id="KW-0460">Magnesium</keyword>
<keyword id="KW-0479">Metal-binding</keyword>
<keyword id="KW-0547">Nucleotide-binding</keyword>
<keyword id="KW-0630">Potassium</keyword>
<keyword id="KW-0819">tRNA processing</keyword>
<dbReference type="EC" id="3.6.-.-" evidence="1"/>
<dbReference type="EMBL" id="CP000412">
    <property type="protein sequence ID" value="ABJ59413.1"/>
    <property type="molecule type" value="Genomic_DNA"/>
</dbReference>
<dbReference type="RefSeq" id="WP_003622148.1">
    <property type="nucleotide sequence ID" value="NC_008529.1"/>
</dbReference>
<dbReference type="SMR" id="Q047F9"/>
<dbReference type="KEGG" id="lbu:LBUL_2036"/>
<dbReference type="HOGENOM" id="CLU_019624_4_1_9"/>
<dbReference type="BioCyc" id="LDEL321956:LBUL_RS09635-MONOMER"/>
<dbReference type="GO" id="GO:0005829">
    <property type="term" value="C:cytosol"/>
    <property type="evidence" value="ECO:0007669"/>
    <property type="project" value="TreeGrafter"/>
</dbReference>
<dbReference type="GO" id="GO:0005525">
    <property type="term" value="F:GTP binding"/>
    <property type="evidence" value="ECO:0007669"/>
    <property type="project" value="UniProtKB-UniRule"/>
</dbReference>
<dbReference type="GO" id="GO:0003924">
    <property type="term" value="F:GTPase activity"/>
    <property type="evidence" value="ECO:0007669"/>
    <property type="project" value="UniProtKB-UniRule"/>
</dbReference>
<dbReference type="GO" id="GO:0046872">
    <property type="term" value="F:metal ion binding"/>
    <property type="evidence" value="ECO:0007669"/>
    <property type="project" value="UniProtKB-KW"/>
</dbReference>
<dbReference type="GO" id="GO:0030488">
    <property type="term" value="P:tRNA methylation"/>
    <property type="evidence" value="ECO:0007669"/>
    <property type="project" value="TreeGrafter"/>
</dbReference>
<dbReference type="GO" id="GO:0002098">
    <property type="term" value="P:tRNA wobble uridine modification"/>
    <property type="evidence" value="ECO:0007669"/>
    <property type="project" value="TreeGrafter"/>
</dbReference>
<dbReference type="CDD" id="cd04164">
    <property type="entry name" value="trmE"/>
    <property type="match status" value="1"/>
</dbReference>
<dbReference type="CDD" id="cd14858">
    <property type="entry name" value="TrmE_N"/>
    <property type="match status" value="1"/>
</dbReference>
<dbReference type="FunFam" id="3.30.1360.120:FF:000003">
    <property type="entry name" value="tRNA modification GTPase MnmE"/>
    <property type="match status" value="1"/>
</dbReference>
<dbReference type="FunFam" id="3.40.50.300:FF:000494">
    <property type="entry name" value="tRNA modification GTPase MnmE"/>
    <property type="match status" value="1"/>
</dbReference>
<dbReference type="Gene3D" id="3.40.50.300">
    <property type="entry name" value="P-loop containing nucleotide triphosphate hydrolases"/>
    <property type="match status" value="1"/>
</dbReference>
<dbReference type="Gene3D" id="3.30.1360.120">
    <property type="entry name" value="Probable tRNA modification gtpase trme, domain 1"/>
    <property type="match status" value="1"/>
</dbReference>
<dbReference type="Gene3D" id="1.20.120.430">
    <property type="entry name" value="tRNA modification GTPase MnmE domain 2"/>
    <property type="match status" value="1"/>
</dbReference>
<dbReference type="HAMAP" id="MF_00379">
    <property type="entry name" value="GTPase_MnmE"/>
    <property type="match status" value="1"/>
</dbReference>
<dbReference type="InterPro" id="IPR031168">
    <property type="entry name" value="G_TrmE"/>
</dbReference>
<dbReference type="InterPro" id="IPR006073">
    <property type="entry name" value="GTP-bd"/>
</dbReference>
<dbReference type="InterPro" id="IPR018948">
    <property type="entry name" value="GTP-bd_TrmE_N"/>
</dbReference>
<dbReference type="InterPro" id="IPR004520">
    <property type="entry name" value="GTPase_MnmE"/>
</dbReference>
<dbReference type="InterPro" id="IPR027368">
    <property type="entry name" value="MnmE_dom2"/>
</dbReference>
<dbReference type="InterPro" id="IPR025867">
    <property type="entry name" value="MnmE_helical"/>
</dbReference>
<dbReference type="InterPro" id="IPR027417">
    <property type="entry name" value="P-loop_NTPase"/>
</dbReference>
<dbReference type="InterPro" id="IPR005225">
    <property type="entry name" value="Small_GTP-bd"/>
</dbReference>
<dbReference type="InterPro" id="IPR027266">
    <property type="entry name" value="TrmE/GcvT_dom1"/>
</dbReference>
<dbReference type="NCBIfam" id="TIGR00450">
    <property type="entry name" value="mnmE_trmE_thdF"/>
    <property type="match status" value="1"/>
</dbReference>
<dbReference type="NCBIfam" id="NF003661">
    <property type="entry name" value="PRK05291.1-3"/>
    <property type="match status" value="1"/>
</dbReference>
<dbReference type="NCBIfam" id="TIGR00231">
    <property type="entry name" value="small_GTP"/>
    <property type="match status" value="1"/>
</dbReference>
<dbReference type="PANTHER" id="PTHR42714">
    <property type="entry name" value="TRNA MODIFICATION GTPASE GTPBP3"/>
    <property type="match status" value="1"/>
</dbReference>
<dbReference type="PANTHER" id="PTHR42714:SF2">
    <property type="entry name" value="TRNA MODIFICATION GTPASE GTPBP3, MITOCHONDRIAL"/>
    <property type="match status" value="1"/>
</dbReference>
<dbReference type="Pfam" id="PF01926">
    <property type="entry name" value="MMR_HSR1"/>
    <property type="match status" value="1"/>
</dbReference>
<dbReference type="Pfam" id="PF12631">
    <property type="entry name" value="MnmE_helical"/>
    <property type="match status" value="1"/>
</dbReference>
<dbReference type="Pfam" id="PF10396">
    <property type="entry name" value="TrmE_N"/>
    <property type="match status" value="1"/>
</dbReference>
<dbReference type="SUPFAM" id="SSF52540">
    <property type="entry name" value="P-loop containing nucleoside triphosphate hydrolases"/>
    <property type="match status" value="1"/>
</dbReference>
<dbReference type="PROSITE" id="PS51709">
    <property type="entry name" value="G_TRME"/>
    <property type="match status" value="1"/>
</dbReference>